<reference key="1">
    <citation type="journal article" date="2011" name="J. Bacteriol.">
        <title>Complete genome and proteome of Acholeplasma laidlawii.</title>
        <authorList>
            <person name="Lazarev V.N."/>
            <person name="Levitskii S.A."/>
            <person name="Basovskii Y.I."/>
            <person name="Chukin M.M."/>
            <person name="Akopian T.A."/>
            <person name="Vereshchagin V.V."/>
            <person name="Kostrjukova E.S."/>
            <person name="Kovaleva G.Y."/>
            <person name="Kazanov M.D."/>
            <person name="Malko D.B."/>
            <person name="Vitreschak A.G."/>
            <person name="Sernova N.V."/>
            <person name="Gelfand M.S."/>
            <person name="Demina I.A."/>
            <person name="Serebryakova M.V."/>
            <person name="Galyamina M.A."/>
            <person name="Vtyurin N.N."/>
            <person name="Rogov S.I."/>
            <person name="Alexeev D.G."/>
            <person name="Ladygina V.G."/>
            <person name="Govorun V.M."/>
        </authorList>
    </citation>
    <scope>NUCLEOTIDE SEQUENCE [LARGE SCALE GENOMIC DNA]</scope>
    <source>
        <strain>PG-8A</strain>
    </source>
</reference>
<dbReference type="EMBL" id="CP000896">
    <property type="protein sequence ID" value="ABX80717.1"/>
    <property type="molecule type" value="Genomic_DNA"/>
</dbReference>
<dbReference type="RefSeq" id="WP_012242048.1">
    <property type="nucleotide sequence ID" value="NC_010163.1"/>
</dbReference>
<dbReference type="SMR" id="A9NED7"/>
<dbReference type="STRING" id="441768.ACL_0091"/>
<dbReference type="GeneID" id="41338293"/>
<dbReference type="KEGG" id="acl:ACL_0091"/>
<dbReference type="eggNOG" id="COG0185">
    <property type="taxonomic scope" value="Bacteria"/>
</dbReference>
<dbReference type="HOGENOM" id="CLU_144911_0_1_14"/>
<dbReference type="OrthoDB" id="9797833at2"/>
<dbReference type="Proteomes" id="UP000008558">
    <property type="component" value="Chromosome"/>
</dbReference>
<dbReference type="GO" id="GO:0005737">
    <property type="term" value="C:cytoplasm"/>
    <property type="evidence" value="ECO:0007669"/>
    <property type="project" value="UniProtKB-ARBA"/>
</dbReference>
<dbReference type="GO" id="GO:0015935">
    <property type="term" value="C:small ribosomal subunit"/>
    <property type="evidence" value="ECO:0007669"/>
    <property type="project" value="InterPro"/>
</dbReference>
<dbReference type="GO" id="GO:0019843">
    <property type="term" value="F:rRNA binding"/>
    <property type="evidence" value="ECO:0007669"/>
    <property type="project" value="UniProtKB-UniRule"/>
</dbReference>
<dbReference type="GO" id="GO:0003735">
    <property type="term" value="F:structural constituent of ribosome"/>
    <property type="evidence" value="ECO:0007669"/>
    <property type="project" value="InterPro"/>
</dbReference>
<dbReference type="GO" id="GO:0000028">
    <property type="term" value="P:ribosomal small subunit assembly"/>
    <property type="evidence" value="ECO:0007669"/>
    <property type="project" value="TreeGrafter"/>
</dbReference>
<dbReference type="GO" id="GO:0006412">
    <property type="term" value="P:translation"/>
    <property type="evidence" value="ECO:0007669"/>
    <property type="project" value="UniProtKB-UniRule"/>
</dbReference>
<dbReference type="FunFam" id="3.30.860.10:FF:000001">
    <property type="entry name" value="30S ribosomal protein S19"/>
    <property type="match status" value="1"/>
</dbReference>
<dbReference type="Gene3D" id="3.30.860.10">
    <property type="entry name" value="30s Ribosomal Protein S19, Chain A"/>
    <property type="match status" value="1"/>
</dbReference>
<dbReference type="HAMAP" id="MF_00531">
    <property type="entry name" value="Ribosomal_uS19"/>
    <property type="match status" value="1"/>
</dbReference>
<dbReference type="InterPro" id="IPR002222">
    <property type="entry name" value="Ribosomal_uS19"/>
</dbReference>
<dbReference type="InterPro" id="IPR005732">
    <property type="entry name" value="Ribosomal_uS19_bac-type"/>
</dbReference>
<dbReference type="InterPro" id="IPR020934">
    <property type="entry name" value="Ribosomal_uS19_CS"/>
</dbReference>
<dbReference type="InterPro" id="IPR023575">
    <property type="entry name" value="Ribosomal_uS19_SF"/>
</dbReference>
<dbReference type="NCBIfam" id="TIGR01050">
    <property type="entry name" value="rpsS_bact"/>
    <property type="match status" value="1"/>
</dbReference>
<dbReference type="PANTHER" id="PTHR11880">
    <property type="entry name" value="RIBOSOMAL PROTEIN S19P FAMILY MEMBER"/>
    <property type="match status" value="1"/>
</dbReference>
<dbReference type="PANTHER" id="PTHR11880:SF8">
    <property type="entry name" value="SMALL RIBOSOMAL SUBUNIT PROTEIN US19M"/>
    <property type="match status" value="1"/>
</dbReference>
<dbReference type="Pfam" id="PF00203">
    <property type="entry name" value="Ribosomal_S19"/>
    <property type="match status" value="1"/>
</dbReference>
<dbReference type="PIRSF" id="PIRSF002144">
    <property type="entry name" value="Ribosomal_S19"/>
    <property type="match status" value="1"/>
</dbReference>
<dbReference type="PRINTS" id="PR00975">
    <property type="entry name" value="RIBOSOMALS19"/>
</dbReference>
<dbReference type="SUPFAM" id="SSF54570">
    <property type="entry name" value="Ribosomal protein S19"/>
    <property type="match status" value="1"/>
</dbReference>
<dbReference type="PROSITE" id="PS00323">
    <property type="entry name" value="RIBOSOMAL_S19"/>
    <property type="match status" value="1"/>
</dbReference>
<feature type="chain" id="PRO_1000081756" description="Small ribosomal subunit protein uS19">
    <location>
        <begin position="1"/>
        <end position="92"/>
    </location>
</feature>
<name>RS19_ACHLI</name>
<evidence type="ECO:0000255" key="1">
    <source>
        <dbReference type="HAMAP-Rule" id="MF_00531"/>
    </source>
</evidence>
<evidence type="ECO:0000305" key="2"/>
<comment type="function">
    <text evidence="1">Protein S19 forms a complex with S13 that binds strongly to the 16S ribosomal RNA.</text>
</comment>
<comment type="similarity">
    <text evidence="1">Belongs to the universal ribosomal protein uS19 family.</text>
</comment>
<keyword id="KW-1185">Reference proteome</keyword>
<keyword id="KW-0687">Ribonucleoprotein</keyword>
<keyword id="KW-0689">Ribosomal protein</keyword>
<keyword id="KW-0694">RNA-binding</keyword>
<keyword id="KW-0699">rRNA-binding</keyword>
<gene>
    <name evidence="1" type="primary">rpsS</name>
    <name type="ordered locus">ACL_0091</name>
</gene>
<protein>
    <recommendedName>
        <fullName evidence="1">Small ribosomal subunit protein uS19</fullName>
    </recommendedName>
    <alternativeName>
        <fullName evidence="2">30S ribosomal protein S19</fullName>
    </alternativeName>
</protein>
<organism>
    <name type="scientific">Acholeplasma laidlawii (strain PG-8A)</name>
    <dbReference type="NCBI Taxonomy" id="441768"/>
    <lineage>
        <taxon>Bacteria</taxon>
        <taxon>Bacillati</taxon>
        <taxon>Mycoplasmatota</taxon>
        <taxon>Mollicutes</taxon>
        <taxon>Acholeplasmatales</taxon>
        <taxon>Acholeplasmataceae</taxon>
        <taxon>Acholeplasma</taxon>
    </lineage>
</organism>
<accession>A9NED7</accession>
<sequence>MARSLKKGPFADQSLLDKVAKQAKSNDKKVIQTWSRRSTIFPEFIGFTIAVYNGREHVPVYVTEDMVGHKLGEFAPTRTFRGHKKEDKKVKR</sequence>
<proteinExistence type="inferred from homology"/>